<feature type="chain" id="PRO_0000225140" description="Crossover junction endodeoxyribonuclease RuvC">
    <location>
        <begin position="1"/>
        <end position="166"/>
    </location>
</feature>
<feature type="active site" evidence="1">
    <location>
        <position position="11"/>
    </location>
</feature>
<feature type="active site" evidence="1">
    <location>
        <position position="70"/>
    </location>
</feature>
<feature type="active site" evidence="1">
    <location>
        <position position="142"/>
    </location>
</feature>
<feature type="binding site" evidence="1">
    <location>
        <position position="11"/>
    </location>
    <ligand>
        <name>Mg(2+)</name>
        <dbReference type="ChEBI" id="CHEBI:18420"/>
        <label>1</label>
    </ligand>
</feature>
<feature type="binding site" evidence="1">
    <location>
        <position position="70"/>
    </location>
    <ligand>
        <name>Mg(2+)</name>
        <dbReference type="ChEBI" id="CHEBI:18420"/>
        <label>2</label>
    </ligand>
</feature>
<feature type="binding site" evidence="1">
    <location>
        <position position="142"/>
    </location>
    <ligand>
        <name>Mg(2+)</name>
        <dbReference type="ChEBI" id="CHEBI:18420"/>
        <label>1</label>
    </ligand>
</feature>
<comment type="function">
    <text evidence="1">The RuvA-RuvB-RuvC complex processes Holliday junction (HJ) DNA during genetic recombination and DNA repair. Endonuclease that resolves HJ intermediates. Cleaves cruciform DNA by making single-stranded nicks across the HJ at symmetrical positions within the homologous arms, yielding a 5'-phosphate and a 3'-hydroxyl group; requires a central core of homology in the junction. The consensus cleavage sequence is 5'-(A/T)TT(C/G)-3'. Cleavage occurs on the 3'-side of the TT dinucleotide at the point of strand exchange. HJ branch migration catalyzed by RuvA-RuvB allows RuvC to scan DNA until it finds its consensus sequence, where it cleaves and resolves the cruciform DNA.</text>
</comment>
<comment type="catalytic activity">
    <reaction evidence="1">
        <text>Endonucleolytic cleavage at a junction such as a reciprocal single-stranded crossover between two homologous DNA duplexes (Holliday junction).</text>
        <dbReference type="EC" id="3.1.21.10"/>
    </reaction>
</comment>
<comment type="cofactor">
    <cofactor evidence="1">
        <name>Mg(2+)</name>
        <dbReference type="ChEBI" id="CHEBI:18420"/>
    </cofactor>
    <text evidence="1">Binds 2 Mg(2+) ion per subunit.</text>
</comment>
<comment type="subunit">
    <text evidence="1">Homodimer which binds Holliday junction (HJ) DNA. The HJ becomes 2-fold symmetrical on binding to RuvC with unstacked arms; it has a different conformation from HJ DNA in complex with RuvA. In the full resolvosome a probable DNA-RuvA(4)-RuvB(12)-RuvC(2) complex forms which resolves the HJ.</text>
</comment>
<comment type="subcellular location">
    <subcellularLocation>
        <location evidence="1">Cytoplasm</location>
    </subcellularLocation>
</comment>
<comment type="similarity">
    <text evidence="1">Belongs to the RuvC family.</text>
</comment>
<proteinExistence type="inferred from homology"/>
<protein>
    <recommendedName>
        <fullName evidence="1">Crossover junction endodeoxyribonuclease RuvC</fullName>
        <ecNumber evidence="1">3.1.21.10</ecNumber>
    </recommendedName>
    <alternativeName>
        <fullName evidence="1">Holliday junction nuclease RuvC</fullName>
    </alternativeName>
    <alternativeName>
        <fullName evidence="1">Holliday junction resolvase RuvC</fullName>
    </alternativeName>
</protein>
<gene>
    <name evidence="1" type="primary">ruvC</name>
    <name type="ordered locus">DVU_2258</name>
</gene>
<name>RUVC_NITV2</name>
<keyword id="KW-0963">Cytoplasm</keyword>
<keyword id="KW-0227">DNA damage</keyword>
<keyword id="KW-0233">DNA recombination</keyword>
<keyword id="KW-0234">DNA repair</keyword>
<keyword id="KW-0238">DNA-binding</keyword>
<keyword id="KW-0255">Endonuclease</keyword>
<keyword id="KW-0378">Hydrolase</keyword>
<keyword id="KW-0460">Magnesium</keyword>
<keyword id="KW-0479">Metal-binding</keyword>
<keyword id="KW-0540">Nuclease</keyword>
<keyword id="KW-1185">Reference proteome</keyword>
<organism>
    <name type="scientific">Nitratidesulfovibrio vulgaris (strain ATCC 29579 / DSM 644 / CCUG 34227 / NCIMB 8303 / VKM B-1760 / Hildenborough)</name>
    <name type="common">Desulfovibrio vulgaris</name>
    <dbReference type="NCBI Taxonomy" id="882"/>
    <lineage>
        <taxon>Bacteria</taxon>
        <taxon>Pseudomonadati</taxon>
        <taxon>Thermodesulfobacteriota</taxon>
        <taxon>Desulfovibrionia</taxon>
        <taxon>Desulfovibrionales</taxon>
        <taxon>Desulfovibrionaceae</taxon>
        <taxon>Nitratidesulfovibrio</taxon>
    </lineage>
</organism>
<reference key="1">
    <citation type="journal article" date="2004" name="Nat. Biotechnol.">
        <title>The genome sequence of the anaerobic, sulfate-reducing bacterium Desulfovibrio vulgaris Hildenborough.</title>
        <authorList>
            <person name="Heidelberg J.F."/>
            <person name="Seshadri R."/>
            <person name="Haveman S.A."/>
            <person name="Hemme C.L."/>
            <person name="Paulsen I.T."/>
            <person name="Kolonay J.F."/>
            <person name="Eisen J.A."/>
            <person name="Ward N.L."/>
            <person name="Methe B.A."/>
            <person name="Brinkac L.M."/>
            <person name="Daugherty S.C."/>
            <person name="DeBoy R.T."/>
            <person name="Dodson R.J."/>
            <person name="Durkin A.S."/>
            <person name="Madupu R."/>
            <person name="Nelson W.C."/>
            <person name="Sullivan S.A."/>
            <person name="Fouts D.E."/>
            <person name="Haft D.H."/>
            <person name="Selengut J."/>
            <person name="Peterson J.D."/>
            <person name="Davidsen T.M."/>
            <person name="Zafar N."/>
            <person name="Zhou L."/>
            <person name="Radune D."/>
            <person name="Dimitrov G."/>
            <person name="Hance M."/>
            <person name="Tran K."/>
            <person name="Khouri H.M."/>
            <person name="Gill J."/>
            <person name="Utterback T.R."/>
            <person name="Feldblyum T.V."/>
            <person name="Wall J.D."/>
            <person name="Voordouw G."/>
            <person name="Fraser C.M."/>
        </authorList>
    </citation>
    <scope>NUCLEOTIDE SEQUENCE [LARGE SCALE GENOMIC DNA]</scope>
    <source>
        <strain>ATCC 29579 / DSM 644 / CCUG 34227 / NCIMB 8303 / VKM B-1760 / Hildenborough</strain>
    </source>
</reference>
<accession>Q729U1</accession>
<dbReference type="EC" id="3.1.21.10" evidence="1"/>
<dbReference type="EMBL" id="AE017285">
    <property type="protein sequence ID" value="AAS96731.1"/>
    <property type="molecule type" value="Genomic_DNA"/>
</dbReference>
<dbReference type="RefSeq" id="WP_010939533.1">
    <property type="nucleotide sequence ID" value="NC_002937.3"/>
</dbReference>
<dbReference type="RefSeq" id="YP_011471.1">
    <property type="nucleotide sequence ID" value="NC_002937.3"/>
</dbReference>
<dbReference type="SMR" id="Q729U1"/>
<dbReference type="STRING" id="882.DVU_2258"/>
<dbReference type="PaxDb" id="882-DVU_2258"/>
<dbReference type="EnsemblBacteria" id="AAS96731">
    <property type="protein sequence ID" value="AAS96731"/>
    <property type="gene ID" value="DVU_2258"/>
</dbReference>
<dbReference type="KEGG" id="dvu:DVU_2258"/>
<dbReference type="PATRIC" id="fig|882.5.peg.2051"/>
<dbReference type="eggNOG" id="COG0817">
    <property type="taxonomic scope" value="Bacteria"/>
</dbReference>
<dbReference type="HOGENOM" id="CLU_091257_2_1_7"/>
<dbReference type="OrthoDB" id="9805499at2"/>
<dbReference type="PhylomeDB" id="Q729U1"/>
<dbReference type="Proteomes" id="UP000002194">
    <property type="component" value="Chromosome"/>
</dbReference>
<dbReference type="GO" id="GO:0005737">
    <property type="term" value="C:cytoplasm"/>
    <property type="evidence" value="ECO:0007669"/>
    <property type="project" value="UniProtKB-SubCell"/>
</dbReference>
<dbReference type="GO" id="GO:0048476">
    <property type="term" value="C:Holliday junction resolvase complex"/>
    <property type="evidence" value="ECO:0007669"/>
    <property type="project" value="UniProtKB-UniRule"/>
</dbReference>
<dbReference type="GO" id="GO:0008821">
    <property type="term" value="F:crossover junction DNA endonuclease activity"/>
    <property type="evidence" value="ECO:0007669"/>
    <property type="project" value="UniProtKB-UniRule"/>
</dbReference>
<dbReference type="GO" id="GO:0003677">
    <property type="term" value="F:DNA binding"/>
    <property type="evidence" value="ECO:0007669"/>
    <property type="project" value="UniProtKB-KW"/>
</dbReference>
<dbReference type="GO" id="GO:0000287">
    <property type="term" value="F:magnesium ion binding"/>
    <property type="evidence" value="ECO:0007669"/>
    <property type="project" value="UniProtKB-UniRule"/>
</dbReference>
<dbReference type="GO" id="GO:0006310">
    <property type="term" value="P:DNA recombination"/>
    <property type="evidence" value="ECO:0007669"/>
    <property type="project" value="UniProtKB-UniRule"/>
</dbReference>
<dbReference type="GO" id="GO:0006281">
    <property type="term" value="P:DNA repair"/>
    <property type="evidence" value="ECO:0007669"/>
    <property type="project" value="UniProtKB-UniRule"/>
</dbReference>
<dbReference type="CDD" id="cd16962">
    <property type="entry name" value="RuvC"/>
    <property type="match status" value="1"/>
</dbReference>
<dbReference type="FunFam" id="3.30.420.10:FF:000002">
    <property type="entry name" value="Crossover junction endodeoxyribonuclease RuvC"/>
    <property type="match status" value="1"/>
</dbReference>
<dbReference type="Gene3D" id="3.30.420.10">
    <property type="entry name" value="Ribonuclease H-like superfamily/Ribonuclease H"/>
    <property type="match status" value="1"/>
</dbReference>
<dbReference type="HAMAP" id="MF_00034">
    <property type="entry name" value="RuvC"/>
    <property type="match status" value="1"/>
</dbReference>
<dbReference type="InterPro" id="IPR012337">
    <property type="entry name" value="RNaseH-like_sf"/>
</dbReference>
<dbReference type="InterPro" id="IPR036397">
    <property type="entry name" value="RNaseH_sf"/>
</dbReference>
<dbReference type="InterPro" id="IPR002176">
    <property type="entry name" value="X-over_junc_endoDNase_RuvC"/>
</dbReference>
<dbReference type="NCBIfam" id="TIGR00228">
    <property type="entry name" value="ruvC"/>
    <property type="match status" value="1"/>
</dbReference>
<dbReference type="PANTHER" id="PTHR30194">
    <property type="entry name" value="CROSSOVER JUNCTION ENDODEOXYRIBONUCLEASE RUVC"/>
    <property type="match status" value="1"/>
</dbReference>
<dbReference type="PANTHER" id="PTHR30194:SF3">
    <property type="entry name" value="CROSSOVER JUNCTION ENDODEOXYRIBONUCLEASE RUVC"/>
    <property type="match status" value="1"/>
</dbReference>
<dbReference type="Pfam" id="PF02075">
    <property type="entry name" value="RuvC"/>
    <property type="match status" value="1"/>
</dbReference>
<dbReference type="PRINTS" id="PR00696">
    <property type="entry name" value="RSOLVASERUVC"/>
</dbReference>
<dbReference type="SUPFAM" id="SSF53098">
    <property type="entry name" value="Ribonuclease H-like"/>
    <property type="match status" value="1"/>
</dbReference>
<sequence>MAASVTVIGIDPGSQCTGWGIVREASGVLTLVDCGAIRPKGGDFAARLGDLYRQLADVVRAHTPDEAAVEDVHAAQNVATALKLGQARGVVVAACAAHGVPVIDYRPSVIKKALVGTGRAEKEQVGYMVGQVLGVRPDWKLDTGDALAAAICHLNQRRLTRLAGLA</sequence>
<evidence type="ECO:0000255" key="1">
    <source>
        <dbReference type="HAMAP-Rule" id="MF_00034"/>
    </source>
</evidence>